<proteinExistence type="inferred from homology"/>
<name>MSHR_CHABA</name>
<reference key="1">
    <citation type="journal article" date="2003" name="Proc. Natl. Acad. Sci. U.S.A.">
        <title>The genetic basis of adaptive melanism in pocket mice.</title>
        <authorList>
            <person name="Nachman M.W."/>
            <person name="Hoekstra H.E."/>
            <person name="D'Agostino S.L."/>
        </authorList>
    </citation>
    <scope>NUCLEOTIDE SEQUENCE [GENOMIC DNA]</scope>
</reference>
<evidence type="ECO:0000250" key="1">
    <source>
        <dbReference type="UniProtKB" id="Q01726"/>
    </source>
</evidence>
<evidence type="ECO:0000255" key="2"/>
<evidence type="ECO:0000255" key="3">
    <source>
        <dbReference type="PROSITE-ProRule" id="PRU00521"/>
    </source>
</evidence>
<comment type="function">
    <text evidence="1">Receptor for MSH (alpha, beta and gamma) and ACTH. The activity of this receptor is mediated by G proteins which activate adenylate cyclase. Mediates melanogenesis, the production of eumelanin (black/brown) and phaeomelanin (red/yellow), via regulation of cAMP signaling in melanocytes.</text>
</comment>
<comment type="subunit">
    <text evidence="1">Interacts with MGRN1, but does not undergo MGRN1-mediated ubiquitination; this interaction competes with GNAS-binding and thus inhibits agonist-induced cAMP production. Interacts with OPN3; the interaction results in a decrease in MC1R-mediated cAMP signaling and ultimately a decrease in melanin production in melanocytes.</text>
</comment>
<comment type="subcellular location">
    <subcellularLocation>
        <location evidence="1">Cell membrane</location>
        <topology evidence="2">Multi-pass membrane protein</topology>
    </subcellularLocation>
</comment>
<comment type="similarity">
    <text evidence="3">Belongs to the G-protein coupled receptor 1 family.</text>
</comment>
<dbReference type="EMBL" id="AY258937">
    <property type="protein sequence ID" value="AAP03544.1"/>
    <property type="molecule type" value="Genomic_DNA"/>
</dbReference>
<dbReference type="EMBL" id="AY258938">
    <property type="protein sequence ID" value="AAP03545.1"/>
    <property type="molecule type" value="Genomic_DNA"/>
</dbReference>
<dbReference type="SMR" id="Q80SS9"/>
<dbReference type="GlyCosmos" id="Q80SS9">
    <property type="glycosylation" value="2 sites, No reported glycans"/>
</dbReference>
<dbReference type="GO" id="GO:0005886">
    <property type="term" value="C:plasma membrane"/>
    <property type="evidence" value="ECO:0000250"/>
    <property type="project" value="UniProtKB"/>
</dbReference>
<dbReference type="GO" id="GO:0004980">
    <property type="term" value="F:melanocyte-stimulating hormone receptor activity"/>
    <property type="evidence" value="ECO:0007669"/>
    <property type="project" value="InterPro"/>
</dbReference>
<dbReference type="FunFam" id="1.20.1070.10:FF:000211">
    <property type="entry name" value="Melanocyte-stimulating hormone receptor"/>
    <property type="match status" value="1"/>
</dbReference>
<dbReference type="Gene3D" id="1.20.1070.10">
    <property type="entry name" value="Rhodopsin 7-helix transmembrane proteins"/>
    <property type="match status" value="1"/>
</dbReference>
<dbReference type="InterPro" id="IPR000276">
    <property type="entry name" value="GPCR_Rhodpsn"/>
</dbReference>
<dbReference type="InterPro" id="IPR017452">
    <property type="entry name" value="GPCR_Rhodpsn_7TM"/>
</dbReference>
<dbReference type="InterPro" id="IPR001671">
    <property type="entry name" value="Melcrt_ACTH_rcpt"/>
</dbReference>
<dbReference type="InterPro" id="IPR000761">
    <property type="entry name" value="MSH_rcpt"/>
</dbReference>
<dbReference type="PANTHER" id="PTHR22750">
    <property type="entry name" value="G-PROTEIN COUPLED RECEPTOR"/>
    <property type="match status" value="1"/>
</dbReference>
<dbReference type="Pfam" id="PF00001">
    <property type="entry name" value="7tm_1"/>
    <property type="match status" value="1"/>
</dbReference>
<dbReference type="PRINTS" id="PR00237">
    <property type="entry name" value="GPCRRHODOPSN"/>
</dbReference>
<dbReference type="PRINTS" id="PR00534">
    <property type="entry name" value="MCRFAMILY"/>
</dbReference>
<dbReference type="PRINTS" id="PR00536">
    <property type="entry name" value="MELNOCYTESHR"/>
</dbReference>
<dbReference type="SMART" id="SM01381">
    <property type="entry name" value="7TM_GPCR_Srsx"/>
    <property type="match status" value="1"/>
</dbReference>
<dbReference type="SUPFAM" id="SSF81321">
    <property type="entry name" value="Family A G protein-coupled receptor-like"/>
    <property type="match status" value="1"/>
</dbReference>
<dbReference type="PROSITE" id="PS00237">
    <property type="entry name" value="G_PROTEIN_RECEP_F1_1"/>
    <property type="match status" value="1"/>
</dbReference>
<dbReference type="PROSITE" id="PS50262">
    <property type="entry name" value="G_PROTEIN_RECEP_F1_2"/>
    <property type="match status" value="1"/>
</dbReference>
<accession>Q80SS9</accession>
<organism>
    <name type="scientific">Chaetodipus baileyi</name>
    <name type="common">Bailey's pocket mouse</name>
    <name type="synonym">Perognathus baileyi</name>
    <dbReference type="NCBI Taxonomy" id="145407"/>
    <lineage>
        <taxon>Eukaryota</taxon>
        <taxon>Metazoa</taxon>
        <taxon>Chordata</taxon>
        <taxon>Craniata</taxon>
        <taxon>Vertebrata</taxon>
        <taxon>Euteleostomi</taxon>
        <taxon>Mammalia</taxon>
        <taxon>Eutheria</taxon>
        <taxon>Euarchontoglires</taxon>
        <taxon>Glires</taxon>
        <taxon>Rodentia</taxon>
        <taxon>Castorimorpha</taxon>
        <taxon>Heteromyidae</taxon>
        <taxon>Perognathinae</taxon>
        <taxon>Chaetodipus</taxon>
    </lineage>
</organism>
<gene>
    <name type="primary">MC1R</name>
</gene>
<protein>
    <recommendedName>
        <fullName>Melanocyte-stimulating hormone receptor</fullName>
        <shortName>MSH-R</shortName>
    </recommendedName>
    <alternativeName>
        <fullName>Melanocortin receptor 1</fullName>
        <shortName>MC1-R</shortName>
    </alternativeName>
</protein>
<feature type="chain" id="PRO_0000259484" description="Melanocyte-stimulating hormone receptor">
    <location>
        <begin position="1"/>
        <end position="317"/>
    </location>
</feature>
<feature type="topological domain" description="Extracellular" evidence="2">
    <location>
        <begin position="1"/>
        <end position="37"/>
    </location>
</feature>
<feature type="transmembrane region" description="Helical; Name=1" evidence="2">
    <location>
        <begin position="38"/>
        <end position="63"/>
    </location>
</feature>
<feature type="topological domain" description="Cytoplasmic" evidence="2">
    <location>
        <begin position="64"/>
        <end position="72"/>
    </location>
</feature>
<feature type="transmembrane region" description="Helical; Name=2" evidence="2">
    <location>
        <begin position="73"/>
        <end position="93"/>
    </location>
</feature>
<feature type="topological domain" description="Extracellular" evidence="2">
    <location>
        <begin position="94"/>
        <end position="118"/>
    </location>
</feature>
<feature type="transmembrane region" description="Helical; Name=3" evidence="2">
    <location>
        <begin position="119"/>
        <end position="140"/>
    </location>
</feature>
<feature type="topological domain" description="Cytoplasmic" evidence="2">
    <location>
        <begin position="141"/>
        <end position="163"/>
    </location>
</feature>
<feature type="transmembrane region" description="Helical; Name=4" evidence="2">
    <location>
        <begin position="164"/>
        <end position="183"/>
    </location>
</feature>
<feature type="topological domain" description="Extracellular" evidence="2">
    <location>
        <begin position="184"/>
        <end position="191"/>
    </location>
</feature>
<feature type="transmembrane region" description="Helical; Name=5" evidence="2">
    <location>
        <begin position="192"/>
        <end position="211"/>
    </location>
</feature>
<feature type="topological domain" description="Cytoplasmic" evidence="2">
    <location>
        <begin position="212"/>
        <end position="240"/>
    </location>
</feature>
<feature type="transmembrane region" description="Helical; Name=6" evidence="2">
    <location>
        <begin position="241"/>
        <end position="266"/>
    </location>
</feature>
<feature type="topological domain" description="Extracellular" evidence="2">
    <location>
        <begin position="267"/>
        <end position="279"/>
    </location>
</feature>
<feature type="transmembrane region" description="Helical; Name=7" evidence="2">
    <location>
        <begin position="280"/>
        <end position="300"/>
    </location>
</feature>
<feature type="topological domain" description="Cytoplasmic" evidence="2">
    <location>
        <begin position="301"/>
        <end position="317"/>
    </location>
</feature>
<feature type="lipid moiety-binding region" description="S-palmitoyl cysteine" evidence="2">
    <location>
        <position position="315"/>
    </location>
</feature>
<feature type="glycosylation site" description="N-linked (GlcNAc...) asparagine" evidence="2">
    <location>
        <position position="15"/>
    </location>
</feature>
<feature type="glycosylation site" description="N-linked (GlcNAc...) asparagine" evidence="2">
    <location>
        <position position="29"/>
    </location>
</feature>
<sequence>MPMQEPQRRLLDPFNSTRTGTPHLKLSANQTGPWCLHVSIPDGLFLSLGLVSLVENVLVVISIAKNRNLHSPMYYFICCLALSDLLVSVSIVLETTLILVLEAGALATRVTVVQQLDNVIDVLICGSMVSSLCFLGAIAVDRYISIFYALRYHSIVTLPRARWAIVAIWVASISSSTLFVAYYNHTAVLLCLVTFFLATLALMAVLYVHMLARAHQHAQAIAQLHKRQHLVHQGFRLKGAATLTILLGIFFLCWGPFFLYLTLIVLCPKHPTCSCFFKNLNLFLALIIFNSIVDPLIYAFRSQELRMTLKEVLLCSW</sequence>
<keyword id="KW-1003">Cell membrane</keyword>
<keyword id="KW-0297">G-protein coupled receptor</keyword>
<keyword id="KW-0325">Glycoprotein</keyword>
<keyword id="KW-0449">Lipoprotein</keyword>
<keyword id="KW-0472">Membrane</keyword>
<keyword id="KW-0564">Palmitate</keyword>
<keyword id="KW-0675">Receptor</keyword>
<keyword id="KW-0807">Transducer</keyword>
<keyword id="KW-0812">Transmembrane</keyword>
<keyword id="KW-1133">Transmembrane helix</keyword>